<keyword id="KW-0002">3D-structure</keyword>
<keyword id="KW-0119">Carbohydrate metabolism</keyword>
<keyword id="KW-0170">Cobalt</keyword>
<keyword id="KW-0378">Hydrolase</keyword>
<keyword id="KW-0460">Magnesium</keyword>
<keyword id="KW-0464">Manganese</keyword>
<keyword id="KW-0479">Metal-binding</keyword>
<keyword id="KW-0533">Nickel</keyword>
<keyword id="KW-1185">Reference proteome</keyword>
<evidence type="ECO:0000250" key="1"/>
<evidence type="ECO:0000269" key="2">
    <source>
    </source>
</evidence>
<evidence type="ECO:0000305" key="3"/>
<evidence type="ECO:0007829" key="4">
    <source>
        <dbReference type="PDB" id="3KBB"/>
    </source>
</evidence>
<name>P1254_THEMA</name>
<organism>
    <name type="scientific">Thermotoga maritima (strain ATCC 43589 / DSM 3109 / JCM 10099 / NBRC 100826 / MSB8)</name>
    <dbReference type="NCBI Taxonomy" id="243274"/>
    <lineage>
        <taxon>Bacteria</taxon>
        <taxon>Thermotogati</taxon>
        <taxon>Thermotogota</taxon>
        <taxon>Thermotogae</taxon>
        <taxon>Thermotogales</taxon>
        <taxon>Thermotogaceae</taxon>
        <taxon>Thermotoga</taxon>
    </lineage>
</organism>
<comment type="function">
    <text evidence="2">Displays high phosphatase activity toward erythrose 4-phosphate, fructose 6-phosphate, 2-deoxyglucose 6-phosphate, and mannose 6-phosphate. May have a role in the intracellular metabolism of many phosphorylated carbohydrates.</text>
</comment>
<comment type="cofactor">
    <cofactor evidence="2">
        <name>Co(2+)</name>
        <dbReference type="ChEBI" id="CHEBI:48828"/>
    </cofactor>
    <cofactor evidence="2">
        <name>Mg(2+)</name>
        <dbReference type="ChEBI" id="CHEBI:18420"/>
    </cofactor>
    <cofactor evidence="2">
        <name>Mn(2+)</name>
        <dbReference type="ChEBI" id="CHEBI:29035"/>
    </cofactor>
    <cofactor evidence="2">
        <name>Ni(2+)</name>
        <dbReference type="ChEBI" id="CHEBI:49786"/>
    </cofactor>
    <text evidence="2">Divalent metal cation. Highest activity with Co(2+), followed by Mg(2+), Mn(2+) or Ni(2+).</text>
</comment>
<comment type="biophysicochemical properties">
    <kinetics>
        <KM evidence="2">152 uM for erythrose 4-phosphate</KM>
        <KM evidence="2">0.2 mM for fructose 6-phosphate</KM>
        <Vmax evidence="2">2.63 umol/min/mg enzyme with erythrose 4-phosphate as substrate</Vmax>
    </kinetics>
</comment>
<comment type="similarity">
    <text evidence="3">Belongs to the HAD-like hydrolase superfamily.</text>
</comment>
<protein>
    <recommendedName>
        <fullName>Phosphorylated carbohydrates phosphatase TM_1254</fullName>
        <ecNumber>3.1.3.-</ecNumber>
    </recommendedName>
</protein>
<sequence length="216" mass="24629">MEAVIFDMDGVLMDTEPLYFEAYRRVAESYGKPYTEDLHRRIMGVPEREGLPILMEALEIKDSLENFKKRVHEEKKRVFSELLKENPGVREALEFVKSKRIKLALATSTPQREALERLRRLDLEKYFDVMVFGDQVKNGKPDPEIYLLVLERLNVVPEKVVVFEDSKSGVEAAKSAGIERIYGVVHSLNDGKALLEAGAVALVKPEEILNVLKEVL</sequence>
<proteinExistence type="evidence at protein level"/>
<accession>Q9X0Y1</accession>
<reference key="1">
    <citation type="journal article" date="1999" name="Nature">
        <title>Evidence for lateral gene transfer between Archaea and Bacteria from genome sequence of Thermotoga maritima.</title>
        <authorList>
            <person name="Nelson K.E."/>
            <person name="Clayton R.A."/>
            <person name="Gill S.R."/>
            <person name="Gwinn M.L."/>
            <person name="Dodson R.J."/>
            <person name="Haft D.H."/>
            <person name="Hickey E.K."/>
            <person name="Peterson J.D."/>
            <person name="Nelson W.C."/>
            <person name="Ketchum K.A."/>
            <person name="McDonald L.A."/>
            <person name="Utterback T.R."/>
            <person name="Malek J.A."/>
            <person name="Linher K.D."/>
            <person name="Garrett M.M."/>
            <person name="Stewart A.M."/>
            <person name="Cotton M.D."/>
            <person name="Pratt M.S."/>
            <person name="Phillips C.A."/>
            <person name="Richardson D.L."/>
            <person name="Heidelberg J.F."/>
            <person name="Sutton G.G."/>
            <person name="Fleischmann R.D."/>
            <person name="Eisen J.A."/>
            <person name="White O."/>
            <person name="Salzberg S.L."/>
            <person name="Smith H.O."/>
            <person name="Venter J.C."/>
            <person name="Fraser C.M."/>
        </authorList>
    </citation>
    <scope>NUCLEOTIDE SEQUENCE [LARGE SCALE GENOMIC DNA]</scope>
    <source>
        <strain>ATCC 43589 / DSM 3109 / JCM 10099 / NBRC 100826 / MSB8</strain>
    </source>
</reference>
<reference key="2">
    <citation type="journal article" date="2005" name="FEMS Microbiol. Rev.">
        <title>Enzyme genomics: application of general enzymatic screens to discover new enzymes.</title>
        <authorList>
            <person name="Kuznetsova E."/>
            <person name="Proudfoot M."/>
            <person name="Sanders S.A."/>
            <person name="Reinking J."/>
            <person name="Savchenko A."/>
            <person name="Arrowsmith C.H."/>
            <person name="Edwards A.M."/>
            <person name="Yakunin A.F."/>
        </authorList>
    </citation>
    <scope>FUNCTION</scope>
    <scope>COFACTOR</scope>
    <scope>KINETIC PARAMETERS</scope>
</reference>
<dbReference type="EC" id="3.1.3.-"/>
<dbReference type="EMBL" id="AE000512">
    <property type="protein sequence ID" value="AAD36329.1"/>
    <property type="molecule type" value="Genomic_DNA"/>
</dbReference>
<dbReference type="PIR" id="H72277">
    <property type="entry name" value="H72277"/>
</dbReference>
<dbReference type="RefSeq" id="NP_229059.1">
    <property type="nucleotide sequence ID" value="NC_000853.1"/>
</dbReference>
<dbReference type="RefSeq" id="WP_004080009.1">
    <property type="nucleotide sequence ID" value="NZ_CP011107.1"/>
</dbReference>
<dbReference type="PDB" id="3KBB">
    <property type="method" value="X-ray"/>
    <property type="resolution" value="1.74 A"/>
    <property type="chains" value="A=1-216"/>
</dbReference>
<dbReference type="PDBsum" id="3KBB"/>
<dbReference type="SMR" id="Q9X0Y1"/>
<dbReference type="FunCoup" id="Q9X0Y1">
    <property type="interactions" value="33"/>
</dbReference>
<dbReference type="STRING" id="243274.TM_1254"/>
<dbReference type="PaxDb" id="243274-THEMA_08065"/>
<dbReference type="DNASU" id="898229"/>
<dbReference type="EnsemblBacteria" id="AAD36329">
    <property type="protein sequence ID" value="AAD36329"/>
    <property type="gene ID" value="TM_1254"/>
</dbReference>
<dbReference type="KEGG" id="tma:TM1254"/>
<dbReference type="KEGG" id="tmi:THEMA_08065"/>
<dbReference type="KEGG" id="tmm:Tmari_1259"/>
<dbReference type="KEGG" id="tmw:THMA_1279"/>
<dbReference type="eggNOG" id="COG0637">
    <property type="taxonomic scope" value="Bacteria"/>
</dbReference>
<dbReference type="InParanoid" id="Q9X0Y1"/>
<dbReference type="OrthoDB" id="9797743at2"/>
<dbReference type="BRENDA" id="3.1.3.58">
    <property type="organism ID" value="6331"/>
</dbReference>
<dbReference type="EvolutionaryTrace" id="Q9X0Y1"/>
<dbReference type="Proteomes" id="UP000008183">
    <property type="component" value="Chromosome"/>
</dbReference>
<dbReference type="GO" id="GO:0016787">
    <property type="term" value="F:hydrolase activity"/>
    <property type="evidence" value="ECO:0007669"/>
    <property type="project" value="UniProtKB-KW"/>
</dbReference>
<dbReference type="GO" id="GO:0046872">
    <property type="term" value="F:metal ion binding"/>
    <property type="evidence" value="ECO:0007669"/>
    <property type="project" value="UniProtKB-KW"/>
</dbReference>
<dbReference type="CDD" id="cd16423">
    <property type="entry name" value="HAD_BPGM-like"/>
    <property type="match status" value="1"/>
</dbReference>
<dbReference type="Gene3D" id="3.40.50.1000">
    <property type="entry name" value="HAD superfamily/HAD-like"/>
    <property type="match status" value="1"/>
</dbReference>
<dbReference type="Gene3D" id="1.10.150.240">
    <property type="entry name" value="Putative phosphatase, domain 2"/>
    <property type="match status" value="1"/>
</dbReference>
<dbReference type="InterPro" id="IPR036412">
    <property type="entry name" value="HAD-like_sf"/>
</dbReference>
<dbReference type="InterPro" id="IPR006439">
    <property type="entry name" value="HAD-SF_hydro_IA"/>
</dbReference>
<dbReference type="InterPro" id="IPR041492">
    <property type="entry name" value="HAD_2"/>
</dbReference>
<dbReference type="InterPro" id="IPR023214">
    <property type="entry name" value="HAD_sf"/>
</dbReference>
<dbReference type="InterPro" id="IPR023198">
    <property type="entry name" value="PGP-like_dom2"/>
</dbReference>
<dbReference type="NCBIfam" id="TIGR01549">
    <property type="entry name" value="HAD-SF-IA-v1"/>
    <property type="match status" value="1"/>
</dbReference>
<dbReference type="NCBIfam" id="TIGR01509">
    <property type="entry name" value="HAD-SF-IA-v3"/>
    <property type="match status" value="1"/>
</dbReference>
<dbReference type="PANTHER" id="PTHR18901">
    <property type="entry name" value="2-DEOXYGLUCOSE-6-PHOSPHATE PHOSPHATASE 2"/>
    <property type="match status" value="1"/>
</dbReference>
<dbReference type="PANTHER" id="PTHR18901:SF38">
    <property type="entry name" value="PSEUDOURIDINE-5'-PHOSPHATASE"/>
    <property type="match status" value="1"/>
</dbReference>
<dbReference type="Pfam" id="PF13419">
    <property type="entry name" value="HAD_2"/>
    <property type="match status" value="1"/>
</dbReference>
<dbReference type="PRINTS" id="PR00413">
    <property type="entry name" value="HADHALOGNASE"/>
</dbReference>
<dbReference type="SFLD" id="SFLDG01135">
    <property type="entry name" value="C1.5.6:_HAD__Beta-PGM__Phospha"/>
    <property type="match status" value="1"/>
</dbReference>
<dbReference type="SFLD" id="SFLDG01129">
    <property type="entry name" value="C1.5:_HAD__Beta-PGM__Phosphata"/>
    <property type="match status" value="1"/>
</dbReference>
<dbReference type="SUPFAM" id="SSF56784">
    <property type="entry name" value="HAD-like"/>
    <property type="match status" value="1"/>
</dbReference>
<feature type="chain" id="PRO_0000058124" description="Phosphorylated carbohydrates phosphatase TM_1254">
    <location>
        <begin position="1"/>
        <end position="216"/>
    </location>
</feature>
<feature type="active site" description="Nucleophile" evidence="1">
    <location>
        <position position="7"/>
    </location>
</feature>
<feature type="strand" evidence="4">
    <location>
        <begin position="3"/>
        <end position="8"/>
    </location>
</feature>
<feature type="turn" evidence="4">
    <location>
        <begin position="9"/>
        <end position="11"/>
    </location>
</feature>
<feature type="helix" evidence="4">
    <location>
        <begin position="16"/>
        <end position="18"/>
    </location>
</feature>
<feature type="helix" evidence="4">
    <location>
        <begin position="19"/>
        <end position="29"/>
    </location>
</feature>
<feature type="helix" evidence="4">
    <location>
        <begin position="36"/>
        <end position="42"/>
    </location>
</feature>
<feature type="helix" evidence="4">
    <location>
        <begin position="47"/>
        <end position="57"/>
    </location>
</feature>
<feature type="helix" evidence="4">
    <location>
        <begin position="64"/>
        <end position="82"/>
    </location>
</feature>
<feature type="helix" evidence="4">
    <location>
        <begin position="89"/>
        <end position="98"/>
    </location>
</feature>
<feature type="strand" evidence="4">
    <location>
        <begin position="102"/>
        <end position="106"/>
    </location>
</feature>
<feature type="helix" evidence="4">
    <location>
        <begin position="111"/>
        <end position="120"/>
    </location>
</feature>
<feature type="helix" evidence="4">
    <location>
        <begin position="124"/>
        <end position="126"/>
    </location>
</feature>
<feature type="strand" evidence="4">
    <location>
        <begin position="128"/>
        <end position="131"/>
    </location>
</feature>
<feature type="helix" evidence="4">
    <location>
        <begin position="133"/>
        <end position="135"/>
    </location>
</feature>
<feature type="strand" evidence="4">
    <location>
        <begin position="136"/>
        <end position="138"/>
    </location>
</feature>
<feature type="helix" evidence="4">
    <location>
        <begin position="144"/>
        <end position="153"/>
    </location>
</feature>
<feature type="helix" evidence="4">
    <location>
        <begin position="157"/>
        <end position="159"/>
    </location>
</feature>
<feature type="strand" evidence="4">
    <location>
        <begin position="160"/>
        <end position="164"/>
    </location>
</feature>
<feature type="helix" evidence="4">
    <location>
        <begin position="167"/>
        <end position="175"/>
    </location>
</feature>
<feature type="strand" evidence="4">
    <location>
        <begin position="181"/>
        <end position="184"/>
    </location>
</feature>
<feature type="strand" evidence="4">
    <location>
        <begin position="187"/>
        <end position="189"/>
    </location>
</feature>
<feature type="helix" evidence="4">
    <location>
        <begin position="192"/>
        <end position="196"/>
    </location>
</feature>
<feature type="strand" evidence="4">
    <location>
        <begin position="200"/>
        <end position="203"/>
    </location>
</feature>
<feature type="helix" evidence="4">
    <location>
        <begin position="205"/>
        <end position="207"/>
    </location>
</feature>
<feature type="helix" evidence="4">
    <location>
        <begin position="208"/>
        <end position="215"/>
    </location>
</feature>
<gene>
    <name type="ordered locus">TM_1254</name>
</gene>